<name>RL17_AKKM8</name>
<reference key="1">
    <citation type="journal article" date="2011" name="PLoS ONE">
        <title>The genome of Akkermansia muciniphila, a dedicated intestinal mucin degrader, and its use in exploring intestinal metagenomes.</title>
        <authorList>
            <person name="van Passel M.W."/>
            <person name="Kant R."/>
            <person name="Zoetendal E.G."/>
            <person name="Plugge C.M."/>
            <person name="Derrien M."/>
            <person name="Malfatti S.A."/>
            <person name="Chain P.S."/>
            <person name="Woyke T."/>
            <person name="Palva A."/>
            <person name="de Vos W.M."/>
            <person name="Smidt H."/>
        </authorList>
    </citation>
    <scope>NUCLEOTIDE SEQUENCE [LARGE SCALE GENOMIC DNA]</scope>
    <source>
        <strain>ATCC BAA-835 / DSM 22959 / JCM 33894 / BCRC 81048 / CCUG 64013 / CIP 107961 / Muc</strain>
    </source>
</reference>
<organism>
    <name type="scientific">Akkermansia muciniphila (strain ATCC BAA-835 / DSM 22959 / JCM 33894 / BCRC 81048 / CCUG 64013 / CIP 107961 / Muc)</name>
    <dbReference type="NCBI Taxonomy" id="349741"/>
    <lineage>
        <taxon>Bacteria</taxon>
        <taxon>Pseudomonadati</taxon>
        <taxon>Verrucomicrobiota</taxon>
        <taxon>Verrucomicrobiia</taxon>
        <taxon>Verrucomicrobiales</taxon>
        <taxon>Akkermansiaceae</taxon>
        <taxon>Akkermansia</taxon>
    </lineage>
</organism>
<proteinExistence type="inferred from homology"/>
<keyword id="KW-1185">Reference proteome</keyword>
<keyword id="KW-0687">Ribonucleoprotein</keyword>
<keyword id="KW-0689">Ribosomal protein</keyword>
<protein>
    <recommendedName>
        <fullName evidence="1">Large ribosomal subunit protein bL17</fullName>
    </recommendedName>
    <alternativeName>
        <fullName evidence="2">50S ribosomal protein L17</fullName>
    </alternativeName>
</protein>
<feature type="chain" id="PRO_1000144367" description="Large ribosomal subunit protein bL17">
    <location>
        <begin position="1"/>
        <end position="136"/>
    </location>
</feature>
<comment type="subunit">
    <text evidence="1">Part of the 50S ribosomal subunit. Contacts protein L32.</text>
</comment>
<comment type="similarity">
    <text evidence="1">Belongs to the bacterial ribosomal protein bL17 family.</text>
</comment>
<accession>B2UL54</accession>
<sequence>MRHGVKTSKLQRNASHRRALLANQACSLILNGRITTTLAKAKALRPYVEKLITLAKRGDVHSRRLATATIHNTTAVKRLFDEIAPLCAERKGGYTRIVKLGQRLTDSALVAMIEIIDLPREAAEKEEAPATTEATA</sequence>
<dbReference type="EMBL" id="CP001071">
    <property type="protein sequence ID" value="ACD05327.1"/>
    <property type="molecule type" value="Genomic_DNA"/>
</dbReference>
<dbReference type="RefSeq" id="WP_012420542.1">
    <property type="nucleotide sequence ID" value="NZ_CP071807.1"/>
</dbReference>
<dbReference type="SMR" id="B2UL54"/>
<dbReference type="STRING" id="349741.Amuc_1506"/>
<dbReference type="PaxDb" id="349741-Amuc_1506"/>
<dbReference type="GeneID" id="60881031"/>
<dbReference type="KEGG" id="amu:Amuc_1506"/>
<dbReference type="eggNOG" id="COG0203">
    <property type="taxonomic scope" value="Bacteria"/>
</dbReference>
<dbReference type="HOGENOM" id="CLU_074407_0_0_0"/>
<dbReference type="OrthoDB" id="9809073at2"/>
<dbReference type="BioCyc" id="AMUC349741:G1GBX-1608-MONOMER"/>
<dbReference type="Proteomes" id="UP000001031">
    <property type="component" value="Chromosome"/>
</dbReference>
<dbReference type="GO" id="GO:0022625">
    <property type="term" value="C:cytosolic large ribosomal subunit"/>
    <property type="evidence" value="ECO:0007669"/>
    <property type="project" value="TreeGrafter"/>
</dbReference>
<dbReference type="GO" id="GO:0003735">
    <property type="term" value="F:structural constituent of ribosome"/>
    <property type="evidence" value="ECO:0007669"/>
    <property type="project" value="InterPro"/>
</dbReference>
<dbReference type="GO" id="GO:0006412">
    <property type="term" value="P:translation"/>
    <property type="evidence" value="ECO:0007669"/>
    <property type="project" value="UniProtKB-UniRule"/>
</dbReference>
<dbReference type="Gene3D" id="3.90.1030.10">
    <property type="entry name" value="Ribosomal protein L17"/>
    <property type="match status" value="1"/>
</dbReference>
<dbReference type="HAMAP" id="MF_01368">
    <property type="entry name" value="Ribosomal_bL17"/>
    <property type="match status" value="1"/>
</dbReference>
<dbReference type="InterPro" id="IPR000456">
    <property type="entry name" value="Ribosomal_bL17"/>
</dbReference>
<dbReference type="InterPro" id="IPR047859">
    <property type="entry name" value="Ribosomal_bL17_CS"/>
</dbReference>
<dbReference type="InterPro" id="IPR036373">
    <property type="entry name" value="Ribosomal_bL17_sf"/>
</dbReference>
<dbReference type="NCBIfam" id="TIGR00059">
    <property type="entry name" value="L17"/>
    <property type="match status" value="1"/>
</dbReference>
<dbReference type="PANTHER" id="PTHR14413:SF16">
    <property type="entry name" value="LARGE RIBOSOMAL SUBUNIT PROTEIN BL17M"/>
    <property type="match status" value="1"/>
</dbReference>
<dbReference type="PANTHER" id="PTHR14413">
    <property type="entry name" value="RIBOSOMAL PROTEIN L17"/>
    <property type="match status" value="1"/>
</dbReference>
<dbReference type="Pfam" id="PF01196">
    <property type="entry name" value="Ribosomal_L17"/>
    <property type="match status" value="1"/>
</dbReference>
<dbReference type="SUPFAM" id="SSF64263">
    <property type="entry name" value="Prokaryotic ribosomal protein L17"/>
    <property type="match status" value="1"/>
</dbReference>
<dbReference type="PROSITE" id="PS01167">
    <property type="entry name" value="RIBOSOMAL_L17"/>
    <property type="match status" value="1"/>
</dbReference>
<gene>
    <name evidence="1" type="primary">rplQ</name>
    <name type="ordered locus">Amuc_1506</name>
</gene>
<evidence type="ECO:0000255" key="1">
    <source>
        <dbReference type="HAMAP-Rule" id="MF_01368"/>
    </source>
</evidence>
<evidence type="ECO:0000305" key="2"/>